<proteinExistence type="inferred from homology"/>
<name>RL21_RHOP2</name>
<reference key="1">
    <citation type="submission" date="2006-01" db="EMBL/GenBank/DDBJ databases">
        <title>Complete sequence of Rhodopseudomonas palustris HaA2.</title>
        <authorList>
            <consortium name="US DOE Joint Genome Institute"/>
            <person name="Copeland A."/>
            <person name="Lucas S."/>
            <person name="Lapidus A."/>
            <person name="Barry K."/>
            <person name="Detter J.C."/>
            <person name="Glavina T."/>
            <person name="Hammon N."/>
            <person name="Israni S."/>
            <person name="Pitluck S."/>
            <person name="Chain P."/>
            <person name="Malfatti S."/>
            <person name="Shin M."/>
            <person name="Vergez L."/>
            <person name="Schmutz J."/>
            <person name="Larimer F."/>
            <person name="Land M."/>
            <person name="Hauser L."/>
            <person name="Pelletier D.A."/>
            <person name="Kyrpides N."/>
            <person name="Anderson I."/>
            <person name="Oda Y."/>
            <person name="Harwood C.S."/>
            <person name="Richardson P."/>
        </authorList>
    </citation>
    <scope>NUCLEOTIDE SEQUENCE [LARGE SCALE GENOMIC DNA]</scope>
    <source>
        <strain>HaA2</strain>
    </source>
</reference>
<evidence type="ECO:0000255" key="1">
    <source>
        <dbReference type="HAMAP-Rule" id="MF_01363"/>
    </source>
</evidence>
<evidence type="ECO:0000256" key="2">
    <source>
        <dbReference type="SAM" id="MobiDB-lite"/>
    </source>
</evidence>
<evidence type="ECO:0000305" key="3"/>
<sequence length="128" mass="13767">MFAVIKTGGRQYRVVPEDVLEVGKIEGDVGTIVQLGEVLMLGGDTPLIGLPTVAGASVAAEVLDHKRGPKVISFKKRRRKNSKRKRGYRDEITVLRITEILADGKSPSVGPRPKRVKAEPAPAADAAE</sequence>
<dbReference type="EMBL" id="CP000250">
    <property type="protein sequence ID" value="ABD04957.1"/>
    <property type="molecule type" value="Genomic_DNA"/>
</dbReference>
<dbReference type="RefSeq" id="WP_011439147.1">
    <property type="nucleotide sequence ID" value="NC_007778.1"/>
</dbReference>
<dbReference type="SMR" id="Q2J3K3"/>
<dbReference type="STRING" id="316058.RPB_0246"/>
<dbReference type="KEGG" id="rpb:RPB_0246"/>
<dbReference type="eggNOG" id="COG0261">
    <property type="taxonomic scope" value="Bacteria"/>
</dbReference>
<dbReference type="HOGENOM" id="CLU_061463_1_2_5"/>
<dbReference type="OrthoDB" id="9813334at2"/>
<dbReference type="Proteomes" id="UP000008809">
    <property type="component" value="Chromosome"/>
</dbReference>
<dbReference type="GO" id="GO:0005737">
    <property type="term" value="C:cytoplasm"/>
    <property type="evidence" value="ECO:0007669"/>
    <property type="project" value="UniProtKB-ARBA"/>
</dbReference>
<dbReference type="GO" id="GO:1990904">
    <property type="term" value="C:ribonucleoprotein complex"/>
    <property type="evidence" value="ECO:0007669"/>
    <property type="project" value="UniProtKB-KW"/>
</dbReference>
<dbReference type="GO" id="GO:0005840">
    <property type="term" value="C:ribosome"/>
    <property type="evidence" value="ECO:0007669"/>
    <property type="project" value="UniProtKB-KW"/>
</dbReference>
<dbReference type="GO" id="GO:0019843">
    <property type="term" value="F:rRNA binding"/>
    <property type="evidence" value="ECO:0007669"/>
    <property type="project" value="UniProtKB-UniRule"/>
</dbReference>
<dbReference type="GO" id="GO:0003735">
    <property type="term" value="F:structural constituent of ribosome"/>
    <property type="evidence" value="ECO:0007669"/>
    <property type="project" value="InterPro"/>
</dbReference>
<dbReference type="GO" id="GO:0006412">
    <property type="term" value="P:translation"/>
    <property type="evidence" value="ECO:0007669"/>
    <property type="project" value="UniProtKB-UniRule"/>
</dbReference>
<dbReference type="HAMAP" id="MF_01363">
    <property type="entry name" value="Ribosomal_bL21"/>
    <property type="match status" value="1"/>
</dbReference>
<dbReference type="InterPro" id="IPR028909">
    <property type="entry name" value="bL21-like"/>
</dbReference>
<dbReference type="InterPro" id="IPR036164">
    <property type="entry name" value="bL21-like_sf"/>
</dbReference>
<dbReference type="InterPro" id="IPR001787">
    <property type="entry name" value="Ribosomal_bL21"/>
</dbReference>
<dbReference type="NCBIfam" id="TIGR00061">
    <property type="entry name" value="L21"/>
    <property type="match status" value="1"/>
</dbReference>
<dbReference type="PANTHER" id="PTHR21349">
    <property type="entry name" value="50S RIBOSOMAL PROTEIN L21"/>
    <property type="match status" value="1"/>
</dbReference>
<dbReference type="PANTHER" id="PTHR21349:SF0">
    <property type="entry name" value="LARGE RIBOSOMAL SUBUNIT PROTEIN BL21M"/>
    <property type="match status" value="1"/>
</dbReference>
<dbReference type="Pfam" id="PF00829">
    <property type="entry name" value="Ribosomal_L21p"/>
    <property type="match status" value="1"/>
</dbReference>
<dbReference type="SUPFAM" id="SSF141091">
    <property type="entry name" value="L21p-like"/>
    <property type="match status" value="1"/>
</dbReference>
<keyword id="KW-1185">Reference proteome</keyword>
<keyword id="KW-0687">Ribonucleoprotein</keyword>
<keyword id="KW-0689">Ribosomal protein</keyword>
<keyword id="KW-0694">RNA-binding</keyword>
<keyword id="KW-0699">rRNA-binding</keyword>
<accession>Q2J3K3</accession>
<protein>
    <recommendedName>
        <fullName evidence="1">Large ribosomal subunit protein bL21</fullName>
    </recommendedName>
    <alternativeName>
        <fullName evidence="3">50S ribosomal protein L21</fullName>
    </alternativeName>
</protein>
<feature type="chain" id="PRO_0000270726" description="Large ribosomal subunit protein bL21">
    <location>
        <begin position="1"/>
        <end position="128"/>
    </location>
</feature>
<feature type="region of interest" description="Disordered" evidence="2">
    <location>
        <begin position="104"/>
        <end position="128"/>
    </location>
</feature>
<feature type="compositionally biased region" description="Low complexity" evidence="2">
    <location>
        <begin position="119"/>
        <end position="128"/>
    </location>
</feature>
<organism>
    <name type="scientific">Rhodopseudomonas palustris (strain HaA2)</name>
    <dbReference type="NCBI Taxonomy" id="316058"/>
    <lineage>
        <taxon>Bacteria</taxon>
        <taxon>Pseudomonadati</taxon>
        <taxon>Pseudomonadota</taxon>
        <taxon>Alphaproteobacteria</taxon>
        <taxon>Hyphomicrobiales</taxon>
        <taxon>Nitrobacteraceae</taxon>
        <taxon>Rhodopseudomonas</taxon>
    </lineage>
</organism>
<gene>
    <name evidence="1" type="primary">rplU</name>
    <name type="ordered locus">RPB_0246</name>
</gene>
<comment type="function">
    <text evidence="1">This protein binds to 23S rRNA in the presence of protein L20.</text>
</comment>
<comment type="subunit">
    <text evidence="1">Part of the 50S ribosomal subunit. Contacts protein L20.</text>
</comment>
<comment type="similarity">
    <text evidence="1">Belongs to the bacterial ribosomal protein bL21 family.</text>
</comment>